<name>XNI_YERPA</name>
<evidence type="ECO:0000250" key="1"/>
<evidence type="ECO:0000305" key="2"/>
<protein>
    <recommendedName>
        <fullName>Flap endonuclease Xni</fullName>
        <shortName>FEN</shortName>
        <ecNumber>3.1.-.-</ecNumber>
    </recommendedName>
</protein>
<reference key="1">
    <citation type="journal article" date="2006" name="J. Bacteriol.">
        <title>Complete genome sequence of Yersinia pestis strains Antiqua and Nepal516: evidence of gene reduction in an emerging pathogen.</title>
        <authorList>
            <person name="Chain P.S.G."/>
            <person name="Hu P."/>
            <person name="Malfatti S.A."/>
            <person name="Radnedge L."/>
            <person name="Larimer F."/>
            <person name="Vergez L.M."/>
            <person name="Worsham P."/>
            <person name="Chu M.C."/>
            <person name="Andersen G.L."/>
        </authorList>
    </citation>
    <scope>NUCLEOTIDE SEQUENCE [LARGE SCALE GENOMIC DNA]</scope>
    <source>
        <strain>Antiqua</strain>
    </source>
</reference>
<gene>
    <name type="primary">xni</name>
    <name type="synonym">ygdG</name>
    <name type="ordered locus">YPA_0506</name>
</gene>
<keyword id="KW-0238">DNA-binding</keyword>
<keyword id="KW-0255">Endonuclease</keyword>
<keyword id="KW-0378">Hydrolase</keyword>
<keyword id="KW-0460">Magnesium</keyword>
<keyword id="KW-0479">Metal-binding</keyword>
<keyword id="KW-0540">Nuclease</keyword>
<keyword id="KW-0630">Potassium</keyword>
<accession>Q1CAP8</accession>
<comment type="function">
    <text evidence="1">Has flap endonuclease activity. During DNA replication, flap endonucleases cleave the 5'-overhanging flap structure that is generated by displacement synthesis when DNA polymerase encounters the 5'-end of a downstream Okazaki fragment (By similarity).</text>
</comment>
<comment type="cofactor">
    <cofactor evidence="1">
        <name>Mg(2+)</name>
        <dbReference type="ChEBI" id="CHEBI:18420"/>
    </cofactor>
    <text evidence="1">Binds 2 Mg(2+) per subunit. Only one magnesium ion has a direct interaction with the protein, the other interactions are indirect.</text>
</comment>
<comment type="cofactor">
    <cofactor evidence="1">
        <name>K(+)</name>
        <dbReference type="ChEBI" id="CHEBI:29103"/>
    </cofactor>
    <text evidence="1">Binds 1 K(+) per subunit. The potassium ion strongly increases the affinity for DNA.</text>
</comment>
<comment type="similarity">
    <text evidence="2">Belongs to the Xni family.</text>
</comment>
<proteinExistence type="inferred from homology"/>
<sequence length="230" mass="25585">MQIHLLIVDALNLIRRIHAVQGSPCVKACQHALQQLIQHSQPSHAVAVFDEDDRSDSWRHQCLPDYKAGRSPMPDNLQQEMPLIRQAFNELGVACWHSPGNEADDLAATLVVKVAGAGHQVTIVSTDKGYCQLLAPNIQIRDYFQKRWLDMPFVKQEFGVLPRQLPDYWGLAGISSSKIPGVAGVGAKTATLLLQQADTLEVLYQNLESIPECQRRMKSDPLISPPTAQY</sequence>
<dbReference type="EC" id="3.1.-.-"/>
<dbReference type="EMBL" id="CP000308">
    <property type="protein sequence ID" value="ABG12474.1"/>
    <property type="molecule type" value="Genomic_DNA"/>
</dbReference>
<dbReference type="SMR" id="Q1CAP8"/>
<dbReference type="KEGG" id="ypa:YPA_0506"/>
<dbReference type="Proteomes" id="UP000001971">
    <property type="component" value="Chromosome"/>
</dbReference>
<dbReference type="GO" id="GO:0008409">
    <property type="term" value="F:5'-3' exonuclease activity"/>
    <property type="evidence" value="ECO:0007669"/>
    <property type="project" value="InterPro"/>
</dbReference>
<dbReference type="GO" id="GO:0017108">
    <property type="term" value="F:5'-flap endonuclease activity"/>
    <property type="evidence" value="ECO:0007669"/>
    <property type="project" value="InterPro"/>
</dbReference>
<dbReference type="GO" id="GO:0003677">
    <property type="term" value="F:DNA binding"/>
    <property type="evidence" value="ECO:0007669"/>
    <property type="project" value="UniProtKB-KW"/>
</dbReference>
<dbReference type="GO" id="GO:0046872">
    <property type="term" value="F:metal ion binding"/>
    <property type="evidence" value="ECO:0007669"/>
    <property type="project" value="UniProtKB-KW"/>
</dbReference>
<dbReference type="GO" id="GO:0033567">
    <property type="term" value="P:DNA replication, Okazaki fragment processing"/>
    <property type="evidence" value="ECO:0007669"/>
    <property type="project" value="InterPro"/>
</dbReference>
<dbReference type="CDD" id="cd09898">
    <property type="entry name" value="H3TH_53EXO"/>
    <property type="match status" value="1"/>
</dbReference>
<dbReference type="CDD" id="cd09859">
    <property type="entry name" value="PIN_53EXO"/>
    <property type="match status" value="1"/>
</dbReference>
<dbReference type="FunFam" id="3.40.50.1010:FF:000011">
    <property type="entry name" value="Flap endonuclease Xni"/>
    <property type="match status" value="1"/>
</dbReference>
<dbReference type="Gene3D" id="1.10.150.20">
    <property type="entry name" value="5' to 3' exonuclease, C-terminal subdomain"/>
    <property type="match status" value="1"/>
</dbReference>
<dbReference type="Gene3D" id="3.40.50.1010">
    <property type="entry name" value="5'-nuclease"/>
    <property type="match status" value="1"/>
</dbReference>
<dbReference type="InterPro" id="IPR020046">
    <property type="entry name" value="5-3_exonucl_a-hlix_arch_N"/>
</dbReference>
<dbReference type="InterPro" id="IPR002421">
    <property type="entry name" value="5-3_exonuclease"/>
</dbReference>
<dbReference type="InterPro" id="IPR036279">
    <property type="entry name" value="5-3_exonuclease_C_sf"/>
</dbReference>
<dbReference type="InterPro" id="IPR020045">
    <property type="entry name" value="DNA_polI_H3TH"/>
</dbReference>
<dbReference type="InterPro" id="IPR038969">
    <property type="entry name" value="FEN"/>
</dbReference>
<dbReference type="InterPro" id="IPR008918">
    <property type="entry name" value="HhH2"/>
</dbReference>
<dbReference type="InterPro" id="IPR029060">
    <property type="entry name" value="PIN-like_dom_sf"/>
</dbReference>
<dbReference type="NCBIfam" id="NF007017">
    <property type="entry name" value="PRK09482.1"/>
    <property type="match status" value="1"/>
</dbReference>
<dbReference type="PANTHER" id="PTHR42646:SF2">
    <property type="entry name" value="5'-3' EXONUCLEASE FAMILY PROTEIN"/>
    <property type="match status" value="1"/>
</dbReference>
<dbReference type="PANTHER" id="PTHR42646">
    <property type="entry name" value="FLAP ENDONUCLEASE XNI"/>
    <property type="match status" value="1"/>
</dbReference>
<dbReference type="Pfam" id="PF01367">
    <property type="entry name" value="5_3_exonuc"/>
    <property type="match status" value="1"/>
</dbReference>
<dbReference type="Pfam" id="PF02739">
    <property type="entry name" value="5_3_exonuc_N"/>
    <property type="match status" value="1"/>
</dbReference>
<dbReference type="SMART" id="SM00475">
    <property type="entry name" value="53EXOc"/>
    <property type="match status" value="1"/>
</dbReference>
<dbReference type="SMART" id="SM00279">
    <property type="entry name" value="HhH2"/>
    <property type="match status" value="1"/>
</dbReference>
<dbReference type="SUPFAM" id="SSF47807">
    <property type="entry name" value="5' to 3' exonuclease, C-terminal subdomain"/>
    <property type="match status" value="1"/>
</dbReference>
<dbReference type="SUPFAM" id="SSF88723">
    <property type="entry name" value="PIN domain-like"/>
    <property type="match status" value="1"/>
</dbReference>
<organism>
    <name type="scientific">Yersinia pestis bv. Antiqua (strain Antiqua)</name>
    <dbReference type="NCBI Taxonomy" id="360102"/>
    <lineage>
        <taxon>Bacteria</taxon>
        <taxon>Pseudomonadati</taxon>
        <taxon>Pseudomonadota</taxon>
        <taxon>Gammaproteobacteria</taxon>
        <taxon>Enterobacterales</taxon>
        <taxon>Yersiniaceae</taxon>
        <taxon>Yersinia</taxon>
    </lineage>
</organism>
<feature type="chain" id="PRO_0000297894" description="Flap endonuclease Xni">
    <location>
        <begin position="1"/>
        <end position="230"/>
    </location>
</feature>
<feature type="domain" description="5'-3' exonuclease">
    <location>
        <begin position="160"/>
        <end position="215"/>
    </location>
</feature>
<feature type="region of interest" description="Interaction with DNA" evidence="1">
    <location>
        <begin position="184"/>
        <end position="189"/>
    </location>
</feature>
<feature type="binding site" evidence="1">
    <location>
        <position position="104"/>
    </location>
    <ligand>
        <name>Mg(2+)</name>
        <dbReference type="ChEBI" id="CHEBI:18420"/>
    </ligand>
</feature>
<feature type="binding site" evidence="1">
    <location>
        <position position="171"/>
    </location>
    <ligand>
        <name>K(+)</name>
        <dbReference type="ChEBI" id="CHEBI:29103"/>
    </ligand>
</feature>
<feature type="binding site" evidence="1">
    <location>
        <position position="172"/>
    </location>
    <ligand>
        <name>K(+)</name>
        <dbReference type="ChEBI" id="CHEBI:29103"/>
    </ligand>
</feature>
<feature type="binding site" evidence="1">
    <location>
        <position position="180"/>
    </location>
    <ligand>
        <name>K(+)</name>
        <dbReference type="ChEBI" id="CHEBI:29103"/>
    </ligand>
</feature>
<feature type="binding site" evidence="1">
    <location>
        <position position="182"/>
    </location>
    <ligand>
        <name>K(+)</name>
        <dbReference type="ChEBI" id="CHEBI:29103"/>
    </ligand>
</feature>
<feature type="binding site" evidence="1">
    <location>
        <position position="185"/>
    </location>
    <ligand>
        <name>K(+)</name>
        <dbReference type="ChEBI" id="CHEBI:29103"/>
    </ligand>
</feature>